<keyword id="KW-0002">3D-structure</keyword>
<keyword id="KW-0007">Acetylation</keyword>
<keyword id="KW-0010">Activator</keyword>
<keyword id="KW-0025">Alternative splicing</keyword>
<keyword id="KW-0225">Disease variant</keyword>
<keyword id="KW-0238">DNA-binding</keyword>
<keyword id="KW-0991">Intellectual disability</keyword>
<keyword id="KW-0523">Neurodegeneration</keyword>
<keyword id="KW-0539">Nucleus</keyword>
<keyword id="KW-0597">Phosphoprotein</keyword>
<keyword id="KW-1267">Proteomics identification</keyword>
<keyword id="KW-1185">Reference proteome</keyword>
<keyword id="KW-0677">Repeat</keyword>
<keyword id="KW-0804">Transcription</keyword>
<keyword id="KW-0805">Transcription regulation</keyword>
<evidence type="ECO:0000250" key="1">
    <source>
        <dbReference type="UniProtKB" id="P25976"/>
    </source>
</evidence>
<evidence type="ECO:0000250" key="2">
    <source>
        <dbReference type="UniProtKB" id="P25977"/>
    </source>
</evidence>
<evidence type="ECO:0000255" key="3">
    <source>
        <dbReference type="PROSITE-ProRule" id="PRU00267"/>
    </source>
</evidence>
<evidence type="ECO:0000256" key="4">
    <source>
        <dbReference type="SAM" id="MobiDB-lite"/>
    </source>
</evidence>
<evidence type="ECO:0000269" key="5">
    <source>
    </source>
</evidence>
<evidence type="ECO:0000269" key="6">
    <source>
    </source>
</evidence>
<evidence type="ECO:0000269" key="7">
    <source>
    </source>
</evidence>
<evidence type="ECO:0000269" key="8">
    <source>
    </source>
</evidence>
<evidence type="ECO:0000269" key="9">
    <source>
    </source>
</evidence>
<evidence type="ECO:0000269" key="10">
    <source>
    </source>
</evidence>
<evidence type="ECO:0000269" key="11">
    <source>
    </source>
</evidence>
<evidence type="ECO:0000269" key="12">
    <source>
    </source>
</evidence>
<evidence type="ECO:0000269" key="13">
    <source>
    </source>
</evidence>
<evidence type="ECO:0000269" key="14">
    <source>
    </source>
</evidence>
<evidence type="ECO:0000269" key="15">
    <source>
    </source>
</evidence>
<evidence type="ECO:0000269" key="16">
    <source>
    </source>
</evidence>
<evidence type="ECO:0000269" key="17">
    <source>
    </source>
</evidence>
<evidence type="ECO:0000303" key="18">
    <source>
    </source>
</evidence>
<evidence type="ECO:0000303" key="19">
    <source>
    </source>
</evidence>
<evidence type="ECO:0007744" key="20">
    <source>
    </source>
</evidence>
<evidence type="ECO:0007744" key="21">
    <source>
    </source>
</evidence>
<evidence type="ECO:0007744" key="22">
    <source>
    </source>
</evidence>
<evidence type="ECO:0007744" key="23">
    <source>
    </source>
</evidence>
<evidence type="ECO:0007744" key="24">
    <source>
    </source>
</evidence>
<evidence type="ECO:0007829" key="25">
    <source>
        <dbReference type="PDB" id="1K99"/>
    </source>
</evidence>
<evidence type="ECO:0007829" key="26">
    <source>
        <dbReference type="PDB" id="1L8Y"/>
    </source>
</evidence>
<evidence type="ECO:0007829" key="27">
    <source>
        <dbReference type="PDB" id="2HDZ"/>
    </source>
</evidence>
<sequence length="764" mass="89406">MNGEADCPTDLEMAAPKGQDRWSQEDMLTLLECMKNNLPSNDSSKFKTTESHMDWEKVAFKDFSGDMCKLKWVEISNEVRKFRTLTELILDAQEHVKNPYKGKKLKKHPDFPKKPLTPYFRFFMEKRAKYAKLHPEMSNLDLTKILSKKYKELPEKKKMKYIQDFQREKQEFERNLARFREDHPDLIQNAKKSDIPEKPKTPQQLWYTHEKKVYLKVRPDATTKEVKDSLGKQWSQLSDKKRLKWIHKALEQRKEYEEIMRDYIQKHPELNISEEGITKSTLTKAERQLKDKFDGRPTKPPPNSYSLYCAELMANMKDVPSTERMVLCSQQWKLLSQKEKDAYHKKCDQKKKDYEVELLRFLESLPEEEQQRVLGEEKMLNINKKQATSPASKKPAQEGGKGGSEKPKRPVSAMFIFSEEKRRQLQEERPELSESELTRLLARMWNDLSEKKKAKYKAREAALKAQSERKPGGEREERGKLPESPKRAEEIWQQSVIGDYLARFKNDRVKALKAMEMTWNNMEKKEKLMWIKKAAEDQKRYERELSEMRAPPAATNSSKKMKFQGEPKKPPMNGYQKFSQELLSNGELNHLPLKERMVEIGSRWQRISQSQKEHYKKLAEEQQKQYKVHLDLWVKSLSPQDRAAYKEYISNKRKSMTKLRGPNPKSSRTTLQSKSESEEDDEEDEDDEDEDEEEEDDENGDSSEDGGDSSESSSEDESEDGDENEEDDEDEDDDEDDDEDEDNESEGSSSSSSSSGDSSDSDSN</sequence>
<feature type="chain" id="PRO_0000048625" description="Nucleolar transcription factor 1">
    <location>
        <begin position="1"/>
        <end position="764"/>
    </location>
</feature>
<feature type="DNA-binding region" description="HMG box 1" evidence="3">
    <location>
        <begin position="112"/>
        <end position="180"/>
    </location>
</feature>
<feature type="DNA-binding region" description="HMG box 2" evidence="3">
    <location>
        <begin position="196"/>
        <end position="264"/>
    </location>
</feature>
<feature type="DNA-binding region" description="HMG box 3" evidence="3">
    <location>
        <begin position="298"/>
        <end position="362"/>
    </location>
</feature>
<feature type="DNA-binding region" description="HMG box 4" evidence="3">
    <location>
        <begin position="407"/>
        <end position="475"/>
    </location>
</feature>
<feature type="DNA-binding region" description="HMG box 5" evidence="3">
    <location>
        <begin position="482"/>
        <end position="549"/>
    </location>
</feature>
<feature type="DNA-binding region" description="HMG box 6" evidence="3">
    <location>
        <begin position="568"/>
        <end position="634"/>
    </location>
</feature>
<feature type="region of interest" description="Disordered" evidence="4">
    <location>
        <begin position="1"/>
        <end position="21"/>
    </location>
</feature>
<feature type="region of interest" description="Disordered" evidence="4">
    <location>
        <begin position="381"/>
        <end position="411"/>
    </location>
</feature>
<feature type="region of interest" description="Disordered" evidence="4">
    <location>
        <begin position="459"/>
        <end position="487"/>
    </location>
</feature>
<feature type="region of interest" description="Disordered" evidence="4">
    <location>
        <begin position="546"/>
        <end position="576"/>
    </location>
</feature>
<feature type="region of interest" description="Disordered" evidence="4">
    <location>
        <begin position="648"/>
        <end position="764"/>
    </location>
</feature>
<feature type="compositionally biased region" description="Polar residues" evidence="4">
    <location>
        <begin position="664"/>
        <end position="674"/>
    </location>
</feature>
<feature type="compositionally biased region" description="Acidic residues" evidence="4">
    <location>
        <begin position="677"/>
        <end position="745"/>
    </location>
</feature>
<feature type="compositionally biased region" description="Low complexity" evidence="4">
    <location>
        <begin position="746"/>
        <end position="758"/>
    </location>
</feature>
<feature type="modified residue" description="N-acetylmethionine" evidence="21">
    <location>
        <position position="1"/>
    </location>
</feature>
<feature type="modified residue" description="Phosphothreonine" evidence="20">
    <location>
        <position position="201"/>
    </location>
</feature>
<feature type="modified residue" description="Phosphoserine" evidence="24">
    <location>
        <position position="273"/>
    </location>
</feature>
<feature type="modified residue" description="Phosphoserine" evidence="1">
    <location>
        <position position="336"/>
    </location>
</feature>
<feature type="modified residue" description="Phosphoserine" evidence="24">
    <location>
        <position position="364"/>
    </location>
</feature>
<feature type="modified residue" description="Phosphoserine" evidence="1">
    <location>
        <position position="389"/>
    </location>
</feature>
<feature type="modified residue" description="Phosphoserine" evidence="20 22">
    <location>
        <position position="412"/>
    </location>
</feature>
<feature type="modified residue" description="Phosphoserine" evidence="1">
    <location>
        <position position="433"/>
    </location>
</feature>
<feature type="modified residue" description="Phosphoserine" evidence="24">
    <location>
        <position position="435"/>
    </location>
</feature>
<feature type="modified residue" description="Phosphoserine" evidence="22 23">
    <location>
        <position position="484"/>
    </location>
</feature>
<feature type="modified residue" description="Phosphoserine" evidence="22">
    <location>
        <position position="495"/>
    </location>
</feature>
<feature type="modified residue" description="Phosphoserine" evidence="1">
    <location>
        <position position="546"/>
    </location>
</feature>
<feature type="modified residue" description="Phosphoserine" evidence="1">
    <location>
        <position position="584"/>
    </location>
</feature>
<feature type="modified residue" description="Phosphoserine" evidence="20">
    <location>
        <position position="638"/>
    </location>
</feature>
<feature type="splice variant" id="VSP_002193" description="In isoform UBF2." evidence="18 19">
    <location>
        <begin position="221"/>
        <end position="257"/>
    </location>
</feature>
<feature type="sequence variant" id="VAR_080139" description="In CONDBA; increased RNA polymerase I core element sequence-specific DNA binding; increased transcription from RNA polymerase I promoter; dbSNP:rs1555582065." evidence="14">
    <original>E</original>
    <variation>K</variation>
    <location>
        <position position="210"/>
    </location>
</feature>
<feature type="strand" evidence="25">
    <location>
        <begin position="107"/>
        <end position="111"/>
    </location>
</feature>
<feature type="helix" evidence="25">
    <location>
        <begin position="118"/>
        <end position="131"/>
    </location>
</feature>
<feature type="helix" evidence="25">
    <location>
        <begin position="140"/>
        <end position="152"/>
    </location>
</feature>
<feature type="helix" evidence="25">
    <location>
        <begin position="158"/>
        <end position="176"/>
    </location>
</feature>
<feature type="helix" evidence="25">
    <location>
        <begin position="177"/>
        <end position="181"/>
    </location>
</feature>
<feature type="helix" evidence="27">
    <location>
        <begin position="488"/>
        <end position="503"/>
    </location>
</feature>
<feature type="turn" evidence="27">
    <location>
        <begin position="504"/>
        <end position="506"/>
    </location>
</feature>
<feature type="helix" evidence="27">
    <location>
        <begin position="508"/>
        <end position="521"/>
    </location>
</feature>
<feature type="helix" evidence="27">
    <location>
        <begin position="524"/>
        <end position="545"/>
    </location>
</feature>
<feature type="helix" evidence="26">
    <location>
        <begin position="551"/>
        <end position="553"/>
    </location>
</feature>
<feature type="strand" evidence="26">
    <location>
        <begin position="554"/>
        <end position="558"/>
    </location>
</feature>
<comment type="function">
    <text evidence="5 6 7 14 17">Recognizes the ribosomal RNA gene promoter and activates transcription mediated by RNA polymerase I (Pol I) through cooperative interactions with the transcription factor SL1/TIF-IB complex. It binds specifically to the upstream control element and can activate Pol I promoter escape.</text>
</comment>
<comment type="subunit">
    <text evidence="1 2 5 6 8 9 10 11 12 13 15 16 17">Homodimer (By similarity). Part of Pol I pre-initiation complex (PIC), in which Pol I core assembles with RRN3 and promoter-bound UTBF and SL1/TIF-IB complex (PubMed:11250903, PubMed:11283244, PubMed:36271492). Interacts with TOP2A in the context of Pol I complex (PubMed:36271492). Interacts with TBP (PubMed:7982918). Interacts with TAF1A (PubMed:7491500). Interacts with RASL11A (By similarity). Binds to IRS1 and PIK3CA (By similarity). Interacts with DHX33 (PubMed:21930779). Interacts with PHF6 (PubMed:23229552). Interacts with CEBPA (isoform 1 and isoform 4) (PubMed:20075868). Interacts with DDX11 (PubMed:26089203). Interacts with NOP53 (PubMed:27729611). Interacts with ALKBH2.</text>
</comment>
<comment type="interaction">
    <interactant intactId="EBI-396235">
        <id>P17480</id>
    </interactant>
    <interactant intactId="EBI-447544">
        <id>P01106</id>
        <label>MYC</label>
    </interactant>
    <organismsDiffer>false</organismsDiffer>
    <experiments>2</experiments>
</comment>
<comment type="interaction">
    <interactant intactId="EBI-396235">
        <id>P17480</id>
    </interactant>
    <interactant intactId="EBI-976402">
        <id>Q13950</id>
        <label>RUNX2</label>
    </interactant>
    <organismsDiffer>false</organismsDiffer>
    <experiments>4</experiments>
</comment>
<comment type="interaction">
    <interactant intactId="EBI-396235">
        <id>P17480</id>
    </interactant>
    <interactant intactId="EBI-1053182">
        <id>Q01105</id>
        <label>SET</label>
    </interactant>
    <organismsDiffer>false</organismsDiffer>
    <experiments>4</experiments>
</comment>
<comment type="subcellular location">
    <subcellularLocation>
        <location evidence="1">Nucleus</location>
        <location evidence="1">Nucleolus</location>
    </subcellularLocation>
</comment>
<comment type="alternative products">
    <event type="alternative splicing"/>
    <isoform>
        <id>P17480-1</id>
        <name>UBF1</name>
        <name>Long</name>
        <sequence type="displayed"/>
    </isoform>
    <isoform>
        <id>P17480-2</id>
        <name>UBF2</name>
        <name>Short</name>
        <sequence type="described" ref="VSP_002193"/>
    </isoform>
</comment>
<comment type="PTM">
    <text evidence="1">Phosphorylated and activated by PIK3CA.</text>
</comment>
<comment type="disease" evidence="14">
    <disease id="DI-05101">
        <name>Neurodegeneration, childhood-onset, with brain atrophy</name>
        <acronym>CONDBA</acronym>
        <description>An autosomal dominant neurodegenerative disease with onset in childhood, characterized by progressive cortical atrophy, developmental delay, developmental regression, loss of motor skills and ambulation, absence of language, and intellectual disability.</description>
        <dbReference type="MIM" id="617672"/>
    </disease>
    <text>The disease is caused by variants affecting the gene represented in this entry.</text>
</comment>
<dbReference type="EMBL" id="X53390">
    <property type="protein sequence ID" value="CAA37469.1"/>
    <property type="molecule type" value="mRNA"/>
</dbReference>
<dbReference type="EMBL" id="X53461">
    <property type="protein sequence ID" value="CAA37548.1"/>
    <property type="molecule type" value="mRNA"/>
</dbReference>
<dbReference type="EMBL" id="X56687">
    <property type="protein sequence ID" value="CAA40016.1"/>
    <property type="molecule type" value="mRNA"/>
</dbReference>
<dbReference type="EMBL" id="AK291733">
    <property type="protein sequence ID" value="BAF84422.1"/>
    <property type="molecule type" value="mRNA"/>
</dbReference>
<dbReference type="EMBL" id="AK292518">
    <property type="protein sequence ID" value="BAF85207.1"/>
    <property type="molecule type" value="mRNA"/>
</dbReference>
<dbReference type="EMBL" id="BC042297">
    <property type="protein sequence ID" value="AAH42297.1"/>
    <property type="molecule type" value="mRNA"/>
</dbReference>
<dbReference type="CCDS" id="CCDS11480.1">
    <molecule id="P17480-1"/>
</dbReference>
<dbReference type="CCDS" id="CCDS42346.1">
    <molecule id="P17480-2"/>
</dbReference>
<dbReference type="PIR" id="S09318">
    <property type="entry name" value="S09318"/>
</dbReference>
<dbReference type="PIR" id="S18193">
    <property type="entry name" value="S18193"/>
</dbReference>
<dbReference type="RefSeq" id="NP_001070151.1">
    <molecule id="P17480-2"/>
    <property type="nucleotide sequence ID" value="NM_001076683.2"/>
</dbReference>
<dbReference type="RefSeq" id="NP_001070152.1">
    <molecule id="P17480-2"/>
    <property type="nucleotide sequence ID" value="NM_001076684.3"/>
</dbReference>
<dbReference type="RefSeq" id="NP_055048.1">
    <molecule id="P17480-1"/>
    <property type="nucleotide sequence ID" value="NM_014233.4"/>
</dbReference>
<dbReference type="RefSeq" id="XP_006722122.1">
    <property type="nucleotide sequence ID" value="XM_006722059.3"/>
</dbReference>
<dbReference type="RefSeq" id="XP_006722123.1">
    <property type="nucleotide sequence ID" value="XM_006722060.2"/>
</dbReference>
<dbReference type="RefSeq" id="XP_006722124.1">
    <property type="nucleotide sequence ID" value="XM_006722061.2"/>
</dbReference>
<dbReference type="RefSeq" id="XP_016880492.1">
    <property type="nucleotide sequence ID" value="XM_017025003.1"/>
</dbReference>
<dbReference type="RefSeq" id="XP_016880493.1">
    <property type="nucleotide sequence ID" value="XM_017025004.1"/>
</dbReference>
<dbReference type="PDB" id="1K99">
    <property type="method" value="NMR"/>
    <property type="chains" value="A=103-192"/>
</dbReference>
<dbReference type="PDB" id="1L8Y">
    <property type="method" value="NMR"/>
    <property type="chains" value="A=479-560"/>
</dbReference>
<dbReference type="PDB" id="1L8Z">
    <property type="method" value="NMR"/>
    <property type="chains" value="A=479-560"/>
</dbReference>
<dbReference type="PDB" id="2HDZ">
    <property type="method" value="X-ray"/>
    <property type="resolution" value="2.00 A"/>
    <property type="chains" value="A=479-560"/>
</dbReference>
<dbReference type="PDBsum" id="1K99"/>
<dbReference type="PDBsum" id="1L8Y"/>
<dbReference type="PDBsum" id="1L8Z"/>
<dbReference type="PDBsum" id="2HDZ"/>
<dbReference type="BMRB" id="P17480"/>
<dbReference type="SMR" id="P17480"/>
<dbReference type="BioGRID" id="113190">
    <property type="interactions" value="261"/>
</dbReference>
<dbReference type="DIP" id="DIP-640N"/>
<dbReference type="FunCoup" id="P17480">
    <property type="interactions" value="3409"/>
</dbReference>
<dbReference type="IntAct" id="P17480">
    <property type="interactions" value="84"/>
</dbReference>
<dbReference type="MINT" id="P17480"/>
<dbReference type="STRING" id="9606.ENSP00000302640"/>
<dbReference type="GlyCosmos" id="P17480">
    <property type="glycosylation" value="2 sites, 1 glycan"/>
</dbReference>
<dbReference type="GlyGen" id="P17480">
    <property type="glycosylation" value="4 sites, 1 N-linked glycan (1 site), 1 O-linked glycan (3 sites)"/>
</dbReference>
<dbReference type="iPTMnet" id="P17480"/>
<dbReference type="PhosphoSitePlus" id="P17480"/>
<dbReference type="SwissPalm" id="P17480"/>
<dbReference type="BioMuta" id="UBTF"/>
<dbReference type="DMDM" id="136652"/>
<dbReference type="jPOST" id="P17480"/>
<dbReference type="MassIVE" id="P17480"/>
<dbReference type="PaxDb" id="9606-ENSP00000302640"/>
<dbReference type="PeptideAtlas" id="P17480"/>
<dbReference type="ProteomicsDB" id="53473">
    <molecule id="P17480-1"/>
</dbReference>
<dbReference type="ProteomicsDB" id="53474">
    <molecule id="P17480-2"/>
</dbReference>
<dbReference type="Pumba" id="P17480"/>
<dbReference type="Antibodypedia" id="1769">
    <property type="antibodies" value="406 antibodies from 34 providers"/>
</dbReference>
<dbReference type="DNASU" id="7343"/>
<dbReference type="Ensembl" id="ENST00000302904.8">
    <molecule id="P17480-1"/>
    <property type="protein sequence ID" value="ENSP00000302640.4"/>
    <property type="gene ID" value="ENSG00000108312.16"/>
</dbReference>
<dbReference type="Ensembl" id="ENST00000343638.9">
    <molecule id="P17480-2"/>
    <property type="protein sequence ID" value="ENSP00000345297.5"/>
    <property type="gene ID" value="ENSG00000108312.16"/>
</dbReference>
<dbReference type="Ensembl" id="ENST00000393606.7">
    <molecule id="P17480-2"/>
    <property type="protein sequence ID" value="ENSP00000377231.3"/>
    <property type="gene ID" value="ENSG00000108312.16"/>
</dbReference>
<dbReference type="Ensembl" id="ENST00000436088.6">
    <molecule id="P17480-1"/>
    <property type="protein sequence ID" value="ENSP00000390669.1"/>
    <property type="gene ID" value="ENSG00000108312.16"/>
</dbReference>
<dbReference type="Ensembl" id="ENST00000526094.5">
    <molecule id="P17480-2"/>
    <property type="protein sequence ID" value="ENSP00000432925.1"/>
    <property type="gene ID" value="ENSG00000108312.16"/>
</dbReference>
<dbReference type="Ensembl" id="ENST00000529383.5">
    <molecule id="P17480-1"/>
    <property type="protein sequence ID" value="ENSP00000435708.1"/>
    <property type="gene ID" value="ENSG00000108312.16"/>
</dbReference>
<dbReference type="Ensembl" id="ENST00000533177.5">
    <molecule id="P17480-2"/>
    <property type="protein sequence ID" value="ENSP00000437180.1"/>
    <property type="gene ID" value="ENSG00000108312.16"/>
</dbReference>
<dbReference type="Ensembl" id="ENST00000704741.1">
    <molecule id="P17480-1"/>
    <property type="protein sequence ID" value="ENSP00000516019.1"/>
    <property type="gene ID" value="ENSG00000108312.16"/>
</dbReference>
<dbReference type="Ensembl" id="ENST00000704742.1">
    <molecule id="P17480-2"/>
    <property type="protein sequence ID" value="ENSP00000516020.1"/>
    <property type="gene ID" value="ENSG00000108312.16"/>
</dbReference>
<dbReference type="Ensembl" id="ENST00000704746.1">
    <molecule id="P17480-1"/>
    <property type="protein sequence ID" value="ENSP00000516023.1"/>
    <property type="gene ID" value="ENSG00000108312.16"/>
</dbReference>
<dbReference type="GeneID" id="7343"/>
<dbReference type="KEGG" id="hsa:7343"/>
<dbReference type="MANE-Select" id="ENST00000436088.6">
    <property type="protein sequence ID" value="ENSP00000390669.1"/>
    <property type="RefSeq nucleotide sequence ID" value="NM_014233.4"/>
    <property type="RefSeq protein sequence ID" value="NP_055048.1"/>
</dbReference>
<dbReference type="UCSC" id="uc002igc.4">
    <molecule id="P17480-1"/>
    <property type="organism name" value="human"/>
</dbReference>
<dbReference type="AGR" id="HGNC:12511"/>
<dbReference type="CTD" id="7343"/>
<dbReference type="DisGeNET" id="7343"/>
<dbReference type="GeneCards" id="UBTF"/>
<dbReference type="HGNC" id="HGNC:12511">
    <property type="gene designation" value="UBTF"/>
</dbReference>
<dbReference type="HPA" id="ENSG00000108312">
    <property type="expression patterns" value="Low tissue specificity"/>
</dbReference>
<dbReference type="MalaCards" id="UBTF"/>
<dbReference type="MIM" id="600673">
    <property type="type" value="gene"/>
</dbReference>
<dbReference type="MIM" id="617672">
    <property type="type" value="phenotype"/>
</dbReference>
<dbReference type="neXtProt" id="NX_P17480"/>
<dbReference type="OpenTargets" id="ENSG00000108312"/>
<dbReference type="Orphanet" id="500180">
    <property type="disease" value="Childhood-onset motor and cognitive regression syndrome with extrapyramidal movement disorder"/>
</dbReference>
<dbReference type="PharmGKB" id="PA37158"/>
<dbReference type="VEuPathDB" id="HostDB:ENSG00000108312"/>
<dbReference type="eggNOG" id="KOG0381">
    <property type="taxonomic scope" value="Eukaryota"/>
</dbReference>
<dbReference type="GeneTree" id="ENSGT00940000161141"/>
<dbReference type="HOGENOM" id="CLU_021068_1_0_1"/>
<dbReference type="InParanoid" id="P17480"/>
<dbReference type="OMA" id="MCRMKWI"/>
<dbReference type="OrthoDB" id="1919336at2759"/>
<dbReference type="PAN-GO" id="P17480">
    <property type="GO annotations" value="5 GO annotations based on evolutionary models"/>
</dbReference>
<dbReference type="PhylomeDB" id="P17480"/>
<dbReference type="TreeFam" id="TF328989"/>
<dbReference type="PathwayCommons" id="P17480"/>
<dbReference type="Reactome" id="R-HSA-427413">
    <property type="pathway name" value="NoRC negatively regulates rRNA expression"/>
</dbReference>
<dbReference type="Reactome" id="R-HSA-73728">
    <property type="pathway name" value="RNA Polymerase I Promoter Opening"/>
</dbReference>
<dbReference type="Reactome" id="R-HSA-73762">
    <property type="pathway name" value="RNA Polymerase I Transcription Initiation"/>
</dbReference>
<dbReference type="Reactome" id="R-HSA-73772">
    <property type="pathway name" value="RNA Polymerase I Promoter Escape"/>
</dbReference>
<dbReference type="Reactome" id="R-HSA-73863">
    <property type="pathway name" value="RNA Polymerase I Transcription Termination"/>
</dbReference>
<dbReference type="SignaLink" id="P17480"/>
<dbReference type="SIGNOR" id="P17480"/>
<dbReference type="BioGRID-ORCS" id="7343">
    <property type="hits" value="827 hits in 1177 CRISPR screens"/>
</dbReference>
<dbReference type="CD-CODE" id="6F24707C">
    <property type="entry name" value="Cajal body"/>
</dbReference>
<dbReference type="CD-CODE" id="91857CE7">
    <property type="entry name" value="Nucleolus"/>
</dbReference>
<dbReference type="ChiTaRS" id="UBTF">
    <property type="organism name" value="human"/>
</dbReference>
<dbReference type="EvolutionaryTrace" id="P17480"/>
<dbReference type="GeneWiki" id="UBTF"/>
<dbReference type="GenomeRNAi" id="7343"/>
<dbReference type="Pharos" id="P17480">
    <property type="development level" value="Tbio"/>
</dbReference>
<dbReference type="PRO" id="PR:P17480"/>
<dbReference type="Proteomes" id="UP000005640">
    <property type="component" value="Chromosome 17"/>
</dbReference>
<dbReference type="RNAct" id="P17480">
    <property type="molecule type" value="protein"/>
</dbReference>
<dbReference type="Bgee" id="ENSG00000108312">
    <property type="expression patterns" value="Expressed in sural nerve and 179 other cell types or tissues"/>
</dbReference>
<dbReference type="ExpressionAtlas" id="P17480">
    <property type="expression patterns" value="baseline and differential"/>
</dbReference>
<dbReference type="GO" id="GO:0001650">
    <property type="term" value="C:fibrillar center"/>
    <property type="evidence" value="ECO:0000314"/>
    <property type="project" value="HPA"/>
</dbReference>
<dbReference type="GO" id="GO:0005730">
    <property type="term" value="C:nucleolus"/>
    <property type="evidence" value="ECO:0000314"/>
    <property type="project" value="UniProtKB"/>
</dbReference>
<dbReference type="GO" id="GO:0005654">
    <property type="term" value="C:nucleoplasm"/>
    <property type="evidence" value="ECO:0000304"/>
    <property type="project" value="Reactome"/>
</dbReference>
<dbReference type="GO" id="GO:0005634">
    <property type="term" value="C:nucleus"/>
    <property type="evidence" value="ECO:0000314"/>
    <property type="project" value="UniProtKB"/>
</dbReference>
<dbReference type="GO" id="GO:0003682">
    <property type="term" value="F:chromatin binding"/>
    <property type="evidence" value="ECO:0000314"/>
    <property type="project" value="UniProtKB"/>
</dbReference>
<dbReference type="GO" id="GO:0003723">
    <property type="term" value="F:RNA binding"/>
    <property type="evidence" value="ECO:0007005"/>
    <property type="project" value="UniProtKB"/>
</dbReference>
<dbReference type="GO" id="GO:0001165">
    <property type="term" value="F:RNA polymerase I cis-regulatory region sequence-specific DNA binding"/>
    <property type="evidence" value="ECO:0000314"/>
    <property type="project" value="UniProtKB"/>
</dbReference>
<dbReference type="GO" id="GO:0001164">
    <property type="term" value="F:RNA polymerase I core promoter sequence-specific DNA binding"/>
    <property type="evidence" value="ECO:0000314"/>
    <property type="project" value="UniProtKB"/>
</dbReference>
<dbReference type="GO" id="GO:0001181">
    <property type="term" value="F:RNA polymerase I general transcription initiation factor activity"/>
    <property type="evidence" value="ECO:0000314"/>
    <property type="project" value="ARUK-UCL"/>
</dbReference>
<dbReference type="GO" id="GO:0097110">
    <property type="term" value="F:scaffold protein binding"/>
    <property type="evidence" value="ECO:0000353"/>
    <property type="project" value="CAFA"/>
</dbReference>
<dbReference type="GO" id="GO:0045943">
    <property type="term" value="P:positive regulation of transcription by RNA polymerase I"/>
    <property type="evidence" value="ECO:0000250"/>
    <property type="project" value="UniProtKB"/>
</dbReference>
<dbReference type="GO" id="GO:0006360">
    <property type="term" value="P:transcription by RNA polymerase I"/>
    <property type="evidence" value="ECO:0000315"/>
    <property type="project" value="UniProtKB"/>
</dbReference>
<dbReference type="GO" id="GO:0006361">
    <property type="term" value="P:transcription initiation at RNA polymerase I promoter"/>
    <property type="evidence" value="ECO:0000314"/>
    <property type="project" value="UniProtKB"/>
</dbReference>
<dbReference type="CDD" id="cd21998">
    <property type="entry name" value="HMG-box_UBF1_rpt1-like"/>
    <property type="match status" value="1"/>
</dbReference>
<dbReference type="CDD" id="cd21999">
    <property type="entry name" value="HMG-box_UBF1_rpt2"/>
    <property type="match status" value="1"/>
</dbReference>
<dbReference type="CDD" id="cd22000">
    <property type="entry name" value="HMG-box_UBF1_rpt3"/>
    <property type="match status" value="1"/>
</dbReference>
<dbReference type="CDD" id="cd22001">
    <property type="entry name" value="HMG-box_UBF1_rpt4"/>
    <property type="match status" value="1"/>
</dbReference>
<dbReference type="CDD" id="cd22002">
    <property type="entry name" value="HMG-box_UBF1_rpt5"/>
    <property type="match status" value="1"/>
</dbReference>
<dbReference type="CDD" id="cd22003">
    <property type="entry name" value="HMG-box_UBF1_rpt6-like"/>
    <property type="match status" value="1"/>
</dbReference>
<dbReference type="DisProt" id="DP02468"/>
<dbReference type="FunFam" id="1.10.30.10:FF:000021">
    <property type="entry name" value="nucleolar transcription factor 1 isoform X1"/>
    <property type="match status" value="1"/>
</dbReference>
<dbReference type="FunFam" id="1.10.30.10:FF:000033">
    <property type="entry name" value="nucleolar transcription factor 1 isoform X1"/>
    <property type="match status" value="1"/>
</dbReference>
<dbReference type="FunFam" id="1.10.30.10:FF:000019">
    <property type="entry name" value="nucleolar transcription factor 1 isoform X2"/>
    <property type="match status" value="1"/>
</dbReference>
<dbReference type="FunFam" id="1.10.30.10:FF:000022">
    <property type="entry name" value="nucleolar transcription factor 1 isoform X2"/>
    <property type="match status" value="1"/>
</dbReference>
<dbReference type="FunFam" id="1.10.30.10:FF:000023">
    <property type="entry name" value="nucleolar transcription factor 1 isoform X2"/>
    <property type="match status" value="1"/>
</dbReference>
<dbReference type="FunFam" id="1.10.30.10:FF:000029">
    <property type="entry name" value="nucleolar transcription factor 1 isoform X2"/>
    <property type="match status" value="1"/>
</dbReference>
<dbReference type="Gene3D" id="1.10.30.10">
    <property type="entry name" value="High mobility group box domain"/>
    <property type="match status" value="6"/>
</dbReference>
<dbReference type="InterPro" id="IPR029215">
    <property type="entry name" value="HMG_box_5"/>
</dbReference>
<dbReference type="InterPro" id="IPR009071">
    <property type="entry name" value="HMG_box_dom"/>
</dbReference>
<dbReference type="InterPro" id="IPR036910">
    <property type="entry name" value="HMG_box_dom_sf"/>
</dbReference>
<dbReference type="InterPro" id="IPR051762">
    <property type="entry name" value="UBF1"/>
</dbReference>
<dbReference type="PANTHER" id="PTHR46318:SF4">
    <property type="entry name" value="NUCLEOLAR TRANSCRIPTION FACTOR 1"/>
    <property type="match status" value="1"/>
</dbReference>
<dbReference type="PANTHER" id="PTHR46318">
    <property type="entry name" value="UPSTREAM BINDING TRANSCRIPTION FACTOR"/>
    <property type="match status" value="1"/>
</dbReference>
<dbReference type="Pfam" id="PF00505">
    <property type="entry name" value="HMG_box"/>
    <property type="match status" value="3"/>
</dbReference>
<dbReference type="Pfam" id="PF09011">
    <property type="entry name" value="HMG_box_2"/>
    <property type="match status" value="1"/>
</dbReference>
<dbReference type="Pfam" id="PF14887">
    <property type="entry name" value="HMG_box_5"/>
    <property type="match status" value="1"/>
</dbReference>
<dbReference type="SMART" id="SM00398">
    <property type="entry name" value="HMG"/>
    <property type="match status" value="6"/>
</dbReference>
<dbReference type="SUPFAM" id="SSF47095">
    <property type="entry name" value="HMG-box"/>
    <property type="match status" value="6"/>
</dbReference>
<dbReference type="PROSITE" id="PS50118">
    <property type="entry name" value="HMG_BOX_2"/>
    <property type="match status" value="6"/>
</dbReference>
<name>UBF1_HUMAN</name>
<protein>
    <recommendedName>
        <fullName>Nucleolar transcription factor 1</fullName>
    </recommendedName>
    <alternativeName>
        <fullName>Autoantigen NOR-90</fullName>
    </alternativeName>
    <alternativeName>
        <fullName>Upstream-binding factor 1</fullName>
        <shortName>UBF-1</shortName>
    </alternativeName>
</protein>
<accession>P17480</accession>
<accession>A8K6R8</accession>
<gene>
    <name type="primary">UBTF</name>
    <name type="synonym">UBF</name>
    <name type="synonym">UBF1</name>
</gene>
<proteinExistence type="evidence at protein level"/>
<organism>
    <name type="scientific">Homo sapiens</name>
    <name type="common">Human</name>
    <dbReference type="NCBI Taxonomy" id="9606"/>
    <lineage>
        <taxon>Eukaryota</taxon>
        <taxon>Metazoa</taxon>
        <taxon>Chordata</taxon>
        <taxon>Craniata</taxon>
        <taxon>Vertebrata</taxon>
        <taxon>Euteleostomi</taxon>
        <taxon>Mammalia</taxon>
        <taxon>Eutheria</taxon>
        <taxon>Euarchontoglires</taxon>
        <taxon>Primates</taxon>
        <taxon>Haplorrhini</taxon>
        <taxon>Catarrhini</taxon>
        <taxon>Hominidae</taxon>
        <taxon>Homo</taxon>
    </lineage>
</organism>
<reference key="1">
    <citation type="journal article" date="1990" name="Nature">
        <title>Nucleolar transcription factor hUBF contains a DNA-binding motif with homology to HMG proteins.</title>
        <authorList>
            <person name="Jantzen H.M."/>
            <person name="Admon A."/>
            <person name="Bell S.P."/>
            <person name="Tjian R."/>
        </authorList>
    </citation>
    <scope>NUCLEOTIDE SEQUENCE [MRNA] (ISOFORM UBF1)</scope>
</reference>
<reference key="2">
    <citation type="journal article" date="1991" name="J. Exp. Med.">
        <title>Human autoantibody to RNA polymerase I transcription factor hUBF. Molecular identity of nucleolus organizer region autoantigen NOR-90 and ribosomal RNA transcription upstream binding factor.</title>
        <authorList>
            <person name="Chan E.K.L."/>
            <person name="Imai H."/>
            <person name="Hamel J.C."/>
            <person name="Tan E.M."/>
        </authorList>
    </citation>
    <scope>NUCLEOTIDE SEQUENCE [MRNA] (ISOFORM UBF2)</scope>
</reference>
<reference key="3">
    <citation type="journal article" date="2004" name="Nat. Genet.">
        <title>Complete sequencing and characterization of 21,243 full-length human cDNAs.</title>
        <authorList>
            <person name="Ota T."/>
            <person name="Suzuki Y."/>
            <person name="Nishikawa T."/>
            <person name="Otsuki T."/>
            <person name="Sugiyama T."/>
            <person name="Irie R."/>
            <person name="Wakamatsu A."/>
            <person name="Hayashi K."/>
            <person name="Sato H."/>
            <person name="Nagai K."/>
            <person name="Kimura K."/>
            <person name="Makita H."/>
            <person name="Sekine M."/>
            <person name="Obayashi M."/>
            <person name="Nishi T."/>
            <person name="Shibahara T."/>
            <person name="Tanaka T."/>
            <person name="Ishii S."/>
            <person name="Yamamoto J."/>
            <person name="Saito K."/>
            <person name="Kawai Y."/>
            <person name="Isono Y."/>
            <person name="Nakamura Y."/>
            <person name="Nagahari K."/>
            <person name="Murakami K."/>
            <person name="Yasuda T."/>
            <person name="Iwayanagi T."/>
            <person name="Wagatsuma M."/>
            <person name="Shiratori A."/>
            <person name="Sudo H."/>
            <person name="Hosoiri T."/>
            <person name="Kaku Y."/>
            <person name="Kodaira H."/>
            <person name="Kondo H."/>
            <person name="Sugawara M."/>
            <person name="Takahashi M."/>
            <person name="Kanda K."/>
            <person name="Yokoi T."/>
            <person name="Furuya T."/>
            <person name="Kikkawa E."/>
            <person name="Omura Y."/>
            <person name="Abe K."/>
            <person name="Kamihara K."/>
            <person name="Katsuta N."/>
            <person name="Sato K."/>
            <person name="Tanikawa M."/>
            <person name="Yamazaki M."/>
            <person name="Ninomiya K."/>
            <person name="Ishibashi T."/>
            <person name="Yamashita H."/>
            <person name="Murakawa K."/>
            <person name="Fujimori K."/>
            <person name="Tanai H."/>
            <person name="Kimata M."/>
            <person name="Watanabe M."/>
            <person name="Hiraoka S."/>
            <person name="Chiba Y."/>
            <person name="Ishida S."/>
            <person name="Ono Y."/>
            <person name="Takiguchi S."/>
            <person name="Watanabe S."/>
            <person name="Yosida M."/>
            <person name="Hotuta T."/>
            <person name="Kusano J."/>
            <person name="Kanehori K."/>
            <person name="Takahashi-Fujii A."/>
            <person name="Hara H."/>
            <person name="Tanase T.-O."/>
            <person name="Nomura Y."/>
            <person name="Togiya S."/>
            <person name="Komai F."/>
            <person name="Hara R."/>
            <person name="Takeuchi K."/>
            <person name="Arita M."/>
            <person name="Imose N."/>
            <person name="Musashino K."/>
            <person name="Yuuki H."/>
            <person name="Oshima A."/>
            <person name="Sasaki N."/>
            <person name="Aotsuka S."/>
            <person name="Yoshikawa Y."/>
            <person name="Matsunawa H."/>
            <person name="Ichihara T."/>
            <person name="Shiohata N."/>
            <person name="Sano S."/>
            <person name="Moriya S."/>
            <person name="Momiyama H."/>
            <person name="Satoh N."/>
            <person name="Takami S."/>
            <person name="Terashima Y."/>
            <person name="Suzuki O."/>
            <person name="Nakagawa S."/>
            <person name="Senoh A."/>
            <person name="Mizoguchi H."/>
            <person name="Goto Y."/>
            <person name="Shimizu F."/>
            <person name="Wakebe H."/>
            <person name="Hishigaki H."/>
            <person name="Watanabe T."/>
            <person name="Sugiyama A."/>
            <person name="Takemoto M."/>
            <person name="Kawakami B."/>
            <person name="Yamazaki M."/>
            <person name="Watanabe K."/>
            <person name="Kumagai A."/>
            <person name="Itakura S."/>
            <person name="Fukuzumi Y."/>
            <person name="Fujimori Y."/>
            <person name="Komiyama M."/>
            <person name="Tashiro H."/>
            <person name="Tanigami A."/>
            <person name="Fujiwara T."/>
            <person name="Ono T."/>
            <person name="Yamada K."/>
            <person name="Fujii Y."/>
            <person name="Ozaki K."/>
            <person name="Hirao M."/>
            <person name="Ohmori Y."/>
            <person name="Kawabata A."/>
            <person name="Hikiji T."/>
            <person name="Kobatake N."/>
            <person name="Inagaki H."/>
            <person name="Ikema Y."/>
            <person name="Okamoto S."/>
            <person name="Okitani R."/>
            <person name="Kawakami T."/>
            <person name="Noguchi S."/>
            <person name="Itoh T."/>
            <person name="Shigeta K."/>
            <person name="Senba T."/>
            <person name="Matsumura K."/>
            <person name="Nakajima Y."/>
            <person name="Mizuno T."/>
            <person name="Morinaga M."/>
            <person name="Sasaki M."/>
            <person name="Togashi T."/>
            <person name="Oyama M."/>
            <person name="Hata H."/>
            <person name="Watanabe M."/>
            <person name="Komatsu T."/>
            <person name="Mizushima-Sugano J."/>
            <person name="Satoh T."/>
            <person name="Shirai Y."/>
            <person name="Takahashi Y."/>
            <person name="Nakagawa K."/>
            <person name="Okumura K."/>
            <person name="Nagase T."/>
            <person name="Nomura N."/>
            <person name="Kikuchi H."/>
            <person name="Masuho Y."/>
            <person name="Yamashita R."/>
            <person name="Nakai K."/>
            <person name="Yada T."/>
            <person name="Nakamura Y."/>
            <person name="Ohara O."/>
            <person name="Isogai T."/>
            <person name="Sugano S."/>
        </authorList>
    </citation>
    <scope>NUCLEOTIDE SEQUENCE [LARGE SCALE MRNA] (ISOFORM UBF1)</scope>
    <source>
        <tissue>Placenta</tissue>
        <tissue>Testis</tissue>
    </source>
</reference>
<reference key="4">
    <citation type="journal article" date="2004" name="Genome Res.">
        <title>The status, quality, and expansion of the NIH full-length cDNA project: the Mammalian Gene Collection (MGC).</title>
        <authorList>
            <consortium name="The MGC Project Team"/>
        </authorList>
    </citation>
    <scope>NUCLEOTIDE SEQUENCE [LARGE SCALE MRNA] (ISOFORM UBF2)</scope>
    <source>
        <tissue>Testis</tissue>
    </source>
</reference>
<reference key="5">
    <citation type="journal article" date="1994" name="J. Biol. Chem.">
        <title>The RNA polymerase I transcription factor, upstream binding factor, interacts directly with the TATA box-binding protein.</title>
        <authorList>
            <person name="Kwon H."/>
            <person name="Green M.R."/>
        </authorList>
    </citation>
    <scope>FUNCTION</scope>
    <scope>INTERACTION WITH TBP</scope>
</reference>
<reference key="6">
    <citation type="journal article" date="1995" name="Science">
        <title>Coactivator and promoter-selective properties of RNA polymerase I TAFs.</title>
        <authorList>
            <person name="Beckmann H."/>
            <person name="Chen J.L."/>
            <person name="O'Brien T."/>
            <person name="Tjian R."/>
        </authorList>
    </citation>
    <scope>INTERACTION WITH TAF1A</scope>
</reference>
<reference key="7">
    <citation type="journal article" date="2001" name="EMBO J.">
        <title>hRRN3 is essential in the SL1-mediated recruitment of RNA polymerase I to rRNA gene promoters.</title>
        <authorList>
            <person name="Miller G."/>
            <person name="Panov K.I."/>
            <person name="Friedrich J.K."/>
            <person name="Trinkle-Mulcahy L."/>
            <person name="Lamond A.I."/>
            <person name="Zomerdijk J.C.B.M."/>
        </authorList>
    </citation>
    <scope>FUNCTION OF POL I PIC</scope>
    <scope>SUBUNIT</scope>
</reference>
<reference key="8">
    <citation type="journal article" date="2001" name="Mol. Cell. Biol.">
        <title>A step subsequent to preinitiation complex assembly at the ribosomal RNA gene promoter is rate limiting for human RNA polymerase I-dependent transcription.</title>
        <authorList>
            <person name="Panov K.I."/>
            <person name="Friedrich J.K."/>
            <person name="Zomerdijk J.C."/>
        </authorList>
    </citation>
    <scope>FUNCTION OF POL I PIC</scope>
    <scope>SUBUNIT</scope>
</reference>
<reference key="9">
    <citation type="journal article" date="2006" name="EMBO J.">
        <title>UBF activates RNA polymerase I transcription by stimulating promoter escape.</title>
        <authorList>
            <person name="Panov K.I."/>
            <person name="Friedrich J.K."/>
            <person name="Russell J."/>
            <person name="Zomerdijk J.C."/>
        </authorList>
    </citation>
    <scope>FUNCTION</scope>
</reference>
<reference key="10">
    <citation type="journal article" date="2008" name="Proc. Natl. Acad. Sci. U.S.A.">
        <title>A quantitative atlas of mitotic phosphorylation.</title>
        <authorList>
            <person name="Dephoure N."/>
            <person name="Zhou C."/>
            <person name="Villen J."/>
            <person name="Beausoleil S.A."/>
            <person name="Bakalarski C.E."/>
            <person name="Elledge S.J."/>
            <person name="Gygi S.P."/>
        </authorList>
    </citation>
    <scope>PHOSPHORYLATION [LARGE SCALE ANALYSIS] AT THR-201; SER-412 AND SER-638</scope>
    <scope>IDENTIFICATION BY MASS SPECTROMETRY [LARGE SCALE ANALYSIS]</scope>
    <source>
        <tissue>Cervix carcinoma</tissue>
    </source>
</reference>
<reference key="11">
    <citation type="journal article" date="2009" name="Anal. Chem.">
        <title>Lys-N and trypsin cover complementary parts of the phosphoproteome in a refined SCX-based approach.</title>
        <authorList>
            <person name="Gauci S."/>
            <person name="Helbig A.O."/>
            <person name="Slijper M."/>
            <person name="Krijgsveld J."/>
            <person name="Heck A.J."/>
            <person name="Mohammed S."/>
        </authorList>
    </citation>
    <scope>ACETYLATION [LARGE SCALE ANALYSIS] AT MET-1</scope>
    <scope>IDENTIFICATION BY MASS SPECTROMETRY [LARGE SCALE ANALYSIS]</scope>
</reference>
<reference key="12">
    <citation type="journal article" date="2010" name="EMBO J.">
        <title>Nucleolar retention of a translational C/EBPalpha isoform stimulates rDNA transcription and cell size.</title>
        <authorList>
            <person name="Muller C."/>
            <person name="Bremer A."/>
            <person name="Schreiber S."/>
            <person name="Eichwald S."/>
            <person name="Calkhoven C.F."/>
        </authorList>
    </citation>
    <scope>INTERACTION WITH CEBPA</scope>
</reference>
<reference key="13">
    <citation type="journal article" date="2010" name="Sci. Signal.">
        <title>Quantitative phosphoproteomics reveals widespread full phosphorylation site occupancy during mitosis.</title>
        <authorList>
            <person name="Olsen J.V."/>
            <person name="Vermeulen M."/>
            <person name="Santamaria A."/>
            <person name="Kumar C."/>
            <person name="Miller M.L."/>
            <person name="Jensen L.J."/>
            <person name="Gnad F."/>
            <person name="Cox J."/>
            <person name="Jensen T.S."/>
            <person name="Nigg E.A."/>
            <person name="Brunak S."/>
            <person name="Mann M."/>
        </authorList>
    </citation>
    <scope>PHOSPHORYLATION [LARGE SCALE ANALYSIS] AT SER-412; SER-484 AND SER-495</scope>
    <scope>IDENTIFICATION BY MASS SPECTROMETRY [LARGE SCALE ANALYSIS]</scope>
    <source>
        <tissue>Cervix carcinoma</tissue>
    </source>
</reference>
<reference key="14">
    <citation type="journal article" date="2011" name="BMC Syst. Biol.">
        <title>Initial characterization of the human central proteome.</title>
        <authorList>
            <person name="Burkard T.R."/>
            <person name="Planyavsky M."/>
            <person name="Kaupe I."/>
            <person name="Breitwieser F.P."/>
            <person name="Buerckstuemmer T."/>
            <person name="Bennett K.L."/>
            <person name="Superti-Furga G."/>
            <person name="Colinge J."/>
        </authorList>
    </citation>
    <scope>IDENTIFICATION BY MASS SPECTROMETRY [LARGE SCALE ANALYSIS]</scope>
</reference>
<reference key="15">
    <citation type="journal article" date="2011" name="Mol. Cell. Biol.">
        <title>Identification of DHX33 as a mediator of rRNA synthesis and cell growth.</title>
        <authorList>
            <person name="Zhang Y."/>
            <person name="Forys J.T."/>
            <person name="Miceli A.P."/>
            <person name="Gwinn A.S."/>
            <person name="Weber J.D."/>
        </authorList>
    </citation>
    <scope>INTERACTION WITH DHX33</scope>
</reference>
<reference key="16">
    <citation type="journal article" date="2011" name="Sci. Signal.">
        <title>System-wide temporal characterization of the proteome and phosphoproteome of human embryonic stem cell differentiation.</title>
        <authorList>
            <person name="Rigbolt K.T."/>
            <person name="Prokhorova T.A."/>
            <person name="Akimov V."/>
            <person name="Henningsen J."/>
            <person name="Johansen P.T."/>
            <person name="Kratchmarova I."/>
            <person name="Kassem M."/>
            <person name="Mann M."/>
            <person name="Olsen J.V."/>
            <person name="Blagoev B."/>
        </authorList>
    </citation>
    <scope>PHOSPHORYLATION [LARGE SCALE ANALYSIS] AT SER-484</scope>
    <scope>IDENTIFICATION BY MASS SPECTROMETRY [LARGE SCALE ANALYSIS]</scope>
</reference>
<reference key="17">
    <citation type="journal article" date="2012" name="Proc. Natl. Acad. Sci. U.S.A.">
        <title>N-terminal acetylome analyses and functional insights of the N-terminal acetyltransferase NatB.</title>
        <authorList>
            <person name="Van Damme P."/>
            <person name="Lasa M."/>
            <person name="Polevoda B."/>
            <person name="Gazquez C."/>
            <person name="Elosegui-Artola A."/>
            <person name="Kim D.S."/>
            <person name="De Juan-Pardo E."/>
            <person name="Demeyer K."/>
            <person name="Hole K."/>
            <person name="Larrea E."/>
            <person name="Timmerman E."/>
            <person name="Prieto J."/>
            <person name="Arnesen T."/>
            <person name="Sherman F."/>
            <person name="Gevaert K."/>
            <person name="Aldabe R."/>
        </authorList>
    </citation>
    <scope>IDENTIFICATION BY MASS SPECTROMETRY [LARGE SCALE ANALYSIS]</scope>
</reference>
<reference key="18">
    <citation type="journal article" date="2013" name="Cell Rep.">
        <title>ABH2 couples regulation of ribosomal DNA transcription with DNA alkylation repair.</title>
        <authorList>
            <person name="Li P."/>
            <person name="Gao S."/>
            <person name="Wang L."/>
            <person name="Yu F."/>
            <person name="Li J."/>
            <person name="Wang C."/>
            <person name="Li J."/>
            <person name="Wong J."/>
        </authorList>
    </citation>
    <scope>INTERACTION WITH ALKBH2</scope>
</reference>
<reference key="19">
    <citation type="journal article" date="2013" name="J. Biol. Chem.">
        <title>PHF6 regulates cell cycle progression by suppressing ribosomal RNA synthesis.</title>
        <authorList>
            <person name="Wang J."/>
            <person name="Leung J.W."/>
            <person name="Gong Z."/>
            <person name="Feng L."/>
            <person name="Shi X."/>
            <person name="Chen J."/>
        </authorList>
    </citation>
    <scope>SUBCELLULAR LOCATION</scope>
    <scope>INTERACTION WITH PHF6</scope>
</reference>
<reference key="20">
    <citation type="journal article" date="2013" name="J. Proteome Res.">
        <title>Toward a comprehensive characterization of a human cancer cell phosphoproteome.</title>
        <authorList>
            <person name="Zhou H."/>
            <person name="Di Palma S."/>
            <person name="Preisinger C."/>
            <person name="Peng M."/>
            <person name="Polat A.N."/>
            <person name="Heck A.J."/>
            <person name="Mohammed S."/>
        </authorList>
    </citation>
    <scope>PHOSPHORYLATION [LARGE SCALE ANALYSIS] AT SER-273; SER-364 AND SER-435</scope>
    <scope>IDENTIFICATION BY MASS SPECTROMETRY [LARGE SCALE ANALYSIS]</scope>
    <source>
        <tissue>Cervix carcinoma</tissue>
        <tissue>Erythroleukemia</tissue>
    </source>
</reference>
<reference key="21">
    <citation type="journal article" date="2015" name="Hum. Mol. Genet.">
        <title>The Warsaw breakage syndrome-related protein DDX11 is required for ribosomal RNA synthesis and embryonic development.</title>
        <authorList>
            <person name="Sun X."/>
            <person name="Chen H."/>
            <person name="Deng Z."/>
            <person name="Hu B."/>
            <person name="Luo H."/>
            <person name="Zeng X."/>
            <person name="Han L."/>
            <person name="Cai G."/>
            <person name="Ma L."/>
        </authorList>
    </citation>
    <scope>INTERACTION WITH DDX11</scope>
</reference>
<reference key="22">
    <citation type="journal article" date="2016" name="Oncotarget">
        <title>PICT-1 triggers a pro-death autophagy through inhibiting rRNA transcription and AKT/mTOR/p70S6K signaling pathway.</title>
        <authorList>
            <person name="Chen H."/>
            <person name="Duo Y."/>
            <person name="Hu B."/>
            <person name="Wang Z."/>
            <person name="Zhang F."/>
            <person name="Tsai H."/>
            <person name="Zhang J."/>
            <person name="Zhou L."/>
            <person name="Wang L."/>
            <person name="Wang X."/>
            <person name="Huang L."/>
        </authorList>
    </citation>
    <scope>INTERACTION WITH NOP53</scope>
</reference>
<reference key="23">
    <citation type="journal article" date="2022" name="Life. Sci Alliance">
        <title>The human RNA polymerase I structure reveals an HMG-like docking domain specific to metazoans.</title>
        <authorList>
            <person name="Daiss J.L."/>
            <person name="Pilsl M."/>
            <person name="Straub K."/>
            <person name="Bleckmann A."/>
            <person name="Hocherl M."/>
            <person name="Heiss F.B."/>
            <person name="Abascal-Palacios G."/>
            <person name="Ramsay E.P."/>
            <person name="Tluckova K."/>
            <person name="Mars J.C."/>
            <person name="Furtges T."/>
            <person name="Bruckmann A."/>
            <person name="Rudack T."/>
            <person name="Bernecky C."/>
            <person name="Lamour V."/>
            <person name="Panov K."/>
            <person name="Vannini A."/>
            <person name="Moss T."/>
            <person name="Engel C."/>
        </authorList>
    </citation>
    <scope>SUBUNIT</scope>
    <scope>INTERACTION WITH TOP2A</scope>
</reference>
<reference key="24">
    <citation type="journal article" date="2017" name="Am. J. Hum. Genet.">
        <title>Heterozygous de novo UBTF gain-of-function variant is associated with neurodegeneration in childhood.</title>
        <authorList>
            <person name="Edvardson S."/>
            <person name="Nicolae C.M."/>
            <person name="Agrawal P.B."/>
            <person name="Mignot C."/>
            <person name="Payne K."/>
            <person name="Prasad A.N."/>
            <person name="Prasad C."/>
            <person name="Sadler L."/>
            <person name="Nava C."/>
            <person name="Mullen T.E."/>
            <person name="Begtrup A."/>
            <person name="Baskin B."/>
            <person name="Powis Z."/>
            <person name="Shaag A."/>
            <person name="Keren B."/>
            <person name="Moldovan G.L."/>
            <person name="Elpeleg O."/>
        </authorList>
    </citation>
    <scope>FUNCTION</scope>
    <scope>INVOLVEMENT IN CONDBA</scope>
    <scope>VARIANT CONDBA LYS-210</scope>
    <scope>CHARACTERIZATION OF VARIANT CONDBA LYS-210</scope>
</reference>
<reference key="25">
    <citation type="journal article" date="2002" name="Biochemistry">
        <title>Solution structure of the first HMG box domain in human upstream binding factor.</title>
        <authorList>
            <person name="Xu Y."/>
            <person name="Yang W."/>
            <person name="Wu J."/>
            <person name="Shi Y."/>
        </authorList>
    </citation>
    <scope>STRUCTURE BY NMR OF 103-192</scope>
</reference>
<reference key="26">
    <citation type="journal article" date="2003" name="Biochemistry">
        <title>Solution structure and DNA binding property of the fifth HMG box domain in comparison with the first HMG box domain in human upstream binding factor.</title>
        <authorList>
            <person name="Yang W."/>
            <person name="Xu Y."/>
            <person name="Wu J."/>
            <person name="Zeng W."/>
            <person name="Shi Y."/>
        </authorList>
    </citation>
    <scope>STRUCTURE BY NMR OF 479-560</scope>
</reference>